<accession>Q17G65</accession>
<dbReference type="EMBL" id="CH477265">
    <property type="protein sequence ID" value="EAT45584.1"/>
    <property type="molecule type" value="Genomic_DNA"/>
</dbReference>
<dbReference type="SMR" id="Q17G65"/>
<dbReference type="FunCoup" id="Q17G65">
    <property type="interactions" value="2770"/>
</dbReference>
<dbReference type="STRING" id="7159.Q17G65"/>
<dbReference type="PaxDb" id="7159-AAEL003157-PA"/>
<dbReference type="EnsemblMetazoa" id="AAEL003157-RA">
    <property type="protein sequence ID" value="AAEL003157-PA"/>
    <property type="gene ID" value="AAEL003157"/>
</dbReference>
<dbReference type="GeneID" id="5577419"/>
<dbReference type="KEGG" id="aag:5577419"/>
<dbReference type="VEuPathDB" id="VectorBase:AAEL003157"/>
<dbReference type="eggNOG" id="KOG3692">
    <property type="taxonomic scope" value="Eukaryota"/>
</dbReference>
<dbReference type="HOGENOM" id="CLU_008116_0_0_1"/>
<dbReference type="InParanoid" id="Q17G65"/>
<dbReference type="OMA" id="MHSGCPK"/>
<dbReference type="OrthoDB" id="63589at2759"/>
<dbReference type="PhylomeDB" id="Q17G65"/>
<dbReference type="Proteomes" id="UP000008820">
    <property type="component" value="Chromosome 2"/>
</dbReference>
<dbReference type="Proteomes" id="UP000682892">
    <property type="component" value="Chromosome 2"/>
</dbReference>
<dbReference type="GO" id="GO:0000184">
    <property type="term" value="P:nuclear-transcribed mRNA catabolic process, nonsense-mediated decay"/>
    <property type="evidence" value="ECO:0000250"/>
    <property type="project" value="UniProtKB"/>
</dbReference>
<dbReference type="InterPro" id="IPR019354">
    <property type="entry name" value="SMG8-like"/>
</dbReference>
<dbReference type="PANTHER" id="PTHR13091">
    <property type="entry name" value="AMPLIFIED IN BREAST CANCER 2-RELATED"/>
    <property type="match status" value="1"/>
</dbReference>
<dbReference type="PANTHER" id="PTHR13091:SF0">
    <property type="entry name" value="NONSENSE-MEDIATED MRNA DECAY FACTOR SMG8"/>
    <property type="match status" value="1"/>
</dbReference>
<dbReference type="Pfam" id="PF10220">
    <property type="entry name" value="Smg8_Smg9"/>
    <property type="match status" value="1"/>
</dbReference>
<protein>
    <recommendedName>
        <fullName evidence="2">Nonsense-mediated mRNA decay factor SMG8</fullName>
    </recommendedName>
    <alternativeName>
        <fullName>Protein smg-8 homolog</fullName>
    </alternativeName>
</protein>
<keyword id="KW-0866">Nonsense-mediated mRNA decay</keyword>
<keyword id="KW-1185">Reference proteome</keyword>
<comment type="function">
    <text evidence="1">Involved in nonsense-mediated decay (NMD) of mRNAs containing premature stop codons. Probable component of kinase complex containing SMG1 and recruited to stalled ribosomes (By similarity).</text>
</comment>
<comment type="similarity">
    <text evidence="4">Belongs to the SMG8 family.</text>
</comment>
<sequence length="916" mass="103707">MNPVESFVFPDIPKTIRDVLFKPDKQMIIVGVIGKSSNPTCNKLIGFNLLTTHPALTDSKCCEGRIKFYFENDGNVLYLHFETTFDQQVMAEQLAKAIDTGVQDNFVNFNSYVRSRFARMLLFAIQVCHMIVLVEPTSVFDTSYLSIFKSLKIIREKYVLKFLPKLLKASNVGNYMGKEARLCSPRFIFLFEGTCDIKPEDVEKLEALECAVEEDIYKMLRTEFIITNNSAMSLFSIPRSKKFVFFSSDSKAKSDPLLDSIDMLMEYLDKPAAGQQGDKDEEEFMNKLRPCAGYGMSAWSVGAGAPKTERERSVLTLIKKHVAEAFEHGFDDSVSKYRGRSHFAVPGFKSWFEGFKFLHKIFIENPDNQNYEPVDVDYKAYLENFHKVIDIDERFFADVCEHGMELAMVNYKEMLPHHYSGTFHEKKYQQARELFLRYARGPEVEKHELKLKDYCDSIWLNGKQQCEYPSLRGNPCALGKHKANDPMDHSSGVVFVSACNCGRTQGHREDPYTIRQANYEFYQLIAKSCSNCTLLERIKFPVFEPSSSDFRAAEFINKNLSNLMSLENSNRTPDTGTHPPMTNDHSPHLSGSQKSQDSASNLTFSIDDKEENETHAKNYASQGDADEALEQENLNEIVIKVGEHADQTDKEKAILRQPSTTEYLPGMLHATSPIGLLPQFPSWSLVCLGPSSIYTHNSGLPEHIQSGFLSGSNFLLPWDVSVRLEHAQSWAASYEKIRNRKKNVSQSKSSDSSNNFTLKIFIGIEYECLRGHRFIMSGPDTVLRGGSGIVRDSGSKVVFNDMPIYFPCLCRNSNVAQLMRVHIVTPKAPVNVILEPKAKIFQNNMQSNFTFTTGQPEPIKLTQSAYWILRLPFVYEGDEGPLMPPSEVNASNAAMHGILLAGMYGIKESEISEELL</sequence>
<feature type="chain" id="PRO_0000378170" description="Nonsense-mediated mRNA decay factor SMG8">
    <location>
        <begin position="1"/>
        <end position="916"/>
    </location>
</feature>
<feature type="region of interest" description="Disordered" evidence="3">
    <location>
        <begin position="566"/>
        <end position="626"/>
    </location>
</feature>
<feature type="compositionally biased region" description="Polar residues" evidence="3">
    <location>
        <begin position="589"/>
        <end position="604"/>
    </location>
</feature>
<proteinExistence type="inferred from homology"/>
<name>SMG8_AEDAE</name>
<organism>
    <name type="scientific">Aedes aegypti</name>
    <name type="common">Yellowfever mosquito</name>
    <name type="synonym">Culex aegypti</name>
    <dbReference type="NCBI Taxonomy" id="7159"/>
    <lineage>
        <taxon>Eukaryota</taxon>
        <taxon>Metazoa</taxon>
        <taxon>Ecdysozoa</taxon>
        <taxon>Arthropoda</taxon>
        <taxon>Hexapoda</taxon>
        <taxon>Insecta</taxon>
        <taxon>Pterygota</taxon>
        <taxon>Neoptera</taxon>
        <taxon>Endopterygota</taxon>
        <taxon>Diptera</taxon>
        <taxon>Nematocera</taxon>
        <taxon>Culicoidea</taxon>
        <taxon>Culicidae</taxon>
        <taxon>Culicinae</taxon>
        <taxon>Aedini</taxon>
        <taxon>Aedes</taxon>
        <taxon>Stegomyia</taxon>
    </lineage>
</organism>
<evidence type="ECO:0000250" key="1"/>
<evidence type="ECO:0000250" key="2">
    <source>
        <dbReference type="UniProtKB" id="Q8ND04"/>
    </source>
</evidence>
<evidence type="ECO:0000256" key="3">
    <source>
        <dbReference type="SAM" id="MobiDB-lite"/>
    </source>
</evidence>
<evidence type="ECO:0000305" key="4"/>
<reference key="1">
    <citation type="journal article" date="2007" name="Science">
        <title>Genome sequence of Aedes aegypti, a major arbovirus vector.</title>
        <authorList>
            <person name="Nene V."/>
            <person name="Wortman J.R."/>
            <person name="Lawson D."/>
            <person name="Haas B.J."/>
            <person name="Kodira C.D."/>
            <person name="Tu Z.J."/>
            <person name="Loftus B.J."/>
            <person name="Xi Z."/>
            <person name="Megy K."/>
            <person name="Grabherr M."/>
            <person name="Ren Q."/>
            <person name="Zdobnov E.M."/>
            <person name="Lobo N.F."/>
            <person name="Campbell K.S."/>
            <person name="Brown S.E."/>
            <person name="Bonaldo M.F."/>
            <person name="Zhu J."/>
            <person name="Sinkins S.P."/>
            <person name="Hogenkamp D.G."/>
            <person name="Amedeo P."/>
            <person name="Arensburger P."/>
            <person name="Atkinson P.W."/>
            <person name="Bidwell S.L."/>
            <person name="Biedler J."/>
            <person name="Birney E."/>
            <person name="Bruggner R.V."/>
            <person name="Costas J."/>
            <person name="Coy M.R."/>
            <person name="Crabtree J."/>
            <person name="Crawford M."/>
            <person name="DeBruyn B."/>
            <person name="DeCaprio D."/>
            <person name="Eiglmeier K."/>
            <person name="Eisenstadt E."/>
            <person name="El-Dorry H."/>
            <person name="Gelbart W.M."/>
            <person name="Gomes S.L."/>
            <person name="Hammond M."/>
            <person name="Hannick L.I."/>
            <person name="Hogan J.R."/>
            <person name="Holmes M.H."/>
            <person name="Jaffe D."/>
            <person name="Johnston S.J."/>
            <person name="Kennedy R.C."/>
            <person name="Koo H."/>
            <person name="Kravitz S."/>
            <person name="Kriventseva E.V."/>
            <person name="Kulp D."/>
            <person name="Labutti K."/>
            <person name="Lee E."/>
            <person name="Li S."/>
            <person name="Lovin D.D."/>
            <person name="Mao C."/>
            <person name="Mauceli E."/>
            <person name="Menck C.F."/>
            <person name="Miller J.R."/>
            <person name="Montgomery P."/>
            <person name="Mori A."/>
            <person name="Nascimento A.L."/>
            <person name="Naveira H.F."/>
            <person name="Nusbaum C."/>
            <person name="O'Leary S.B."/>
            <person name="Orvis J."/>
            <person name="Pertea M."/>
            <person name="Quesneville H."/>
            <person name="Reidenbach K.R."/>
            <person name="Rogers Y.-H.C."/>
            <person name="Roth C.W."/>
            <person name="Schneider J.R."/>
            <person name="Schatz M."/>
            <person name="Shumway M."/>
            <person name="Stanke M."/>
            <person name="Stinson E.O."/>
            <person name="Tubio J.M.C."/>
            <person name="Vanzee J.P."/>
            <person name="Verjovski-Almeida S."/>
            <person name="Werner D."/>
            <person name="White O.R."/>
            <person name="Wyder S."/>
            <person name="Zeng Q."/>
            <person name="Zhao Q."/>
            <person name="Zhao Y."/>
            <person name="Hill C.A."/>
            <person name="Raikhel A.S."/>
            <person name="Soares M.B."/>
            <person name="Knudson D.L."/>
            <person name="Lee N.H."/>
            <person name="Galagan J."/>
            <person name="Salzberg S.L."/>
            <person name="Paulsen I.T."/>
            <person name="Dimopoulos G."/>
            <person name="Collins F.H."/>
            <person name="Bruce B."/>
            <person name="Fraser-Liggett C.M."/>
            <person name="Severson D.W."/>
        </authorList>
    </citation>
    <scope>NUCLEOTIDE SEQUENCE [LARGE SCALE GENOMIC DNA]</scope>
    <source>
        <strain>LVPib12</strain>
    </source>
</reference>
<gene>
    <name type="ORF">AAEL003157</name>
</gene>